<proteinExistence type="inferred from homology"/>
<reference key="1">
    <citation type="journal article" date="2008" name="PLoS ONE">
        <title>Genome sequence of the saprophyte Leptospira biflexa provides insights into the evolution of Leptospira and the pathogenesis of leptospirosis.</title>
        <authorList>
            <person name="Picardeau M."/>
            <person name="Bulach D.M."/>
            <person name="Bouchier C."/>
            <person name="Zuerner R.L."/>
            <person name="Zidane N."/>
            <person name="Wilson P.J."/>
            <person name="Creno S."/>
            <person name="Kuczek E.S."/>
            <person name="Bommezzadri S."/>
            <person name="Davis J.C."/>
            <person name="McGrath A."/>
            <person name="Johnson M.J."/>
            <person name="Boursaux-Eude C."/>
            <person name="Seemann T."/>
            <person name="Rouy Z."/>
            <person name="Coppel R.L."/>
            <person name="Rood J.I."/>
            <person name="Lajus A."/>
            <person name="Davies J.K."/>
            <person name="Medigue C."/>
            <person name="Adler B."/>
        </authorList>
    </citation>
    <scope>NUCLEOTIDE SEQUENCE [LARGE SCALE GENOMIC DNA]</scope>
    <source>
        <strain>Patoc 1 / ATCC 23582 / Paris</strain>
    </source>
</reference>
<accession>B0SSG3</accession>
<dbReference type="EMBL" id="CP000786">
    <property type="protein sequence ID" value="ABZ98053.1"/>
    <property type="molecule type" value="Genomic_DNA"/>
</dbReference>
<dbReference type="RefSeq" id="WP_012388929.1">
    <property type="nucleotide sequence ID" value="NC_010602.1"/>
</dbReference>
<dbReference type="SMR" id="B0SSG3"/>
<dbReference type="STRING" id="456481.LEPBI_I1950"/>
<dbReference type="KEGG" id="lbi:LEPBI_I1950"/>
<dbReference type="HOGENOM" id="CLU_065464_1_2_12"/>
<dbReference type="OrthoDB" id="9805007at2"/>
<dbReference type="BioCyc" id="LBIF456481:LEPBI_RS09635-MONOMER"/>
<dbReference type="Proteomes" id="UP000001847">
    <property type="component" value="Chromosome I"/>
</dbReference>
<dbReference type="GO" id="GO:0022625">
    <property type="term" value="C:cytosolic large ribosomal subunit"/>
    <property type="evidence" value="ECO:0007669"/>
    <property type="project" value="TreeGrafter"/>
</dbReference>
<dbReference type="GO" id="GO:0019843">
    <property type="term" value="F:rRNA binding"/>
    <property type="evidence" value="ECO:0007669"/>
    <property type="project" value="UniProtKB-UniRule"/>
</dbReference>
<dbReference type="GO" id="GO:0003735">
    <property type="term" value="F:structural constituent of ribosome"/>
    <property type="evidence" value="ECO:0007669"/>
    <property type="project" value="InterPro"/>
</dbReference>
<dbReference type="GO" id="GO:0002181">
    <property type="term" value="P:cytoplasmic translation"/>
    <property type="evidence" value="ECO:0007669"/>
    <property type="project" value="TreeGrafter"/>
</dbReference>
<dbReference type="FunFam" id="3.90.930.12:FF:000001">
    <property type="entry name" value="50S ribosomal protein L6"/>
    <property type="match status" value="1"/>
</dbReference>
<dbReference type="Gene3D" id="3.90.930.12">
    <property type="entry name" value="Ribosomal protein L6, alpha-beta domain"/>
    <property type="match status" value="2"/>
</dbReference>
<dbReference type="HAMAP" id="MF_01365_B">
    <property type="entry name" value="Ribosomal_uL6_B"/>
    <property type="match status" value="1"/>
</dbReference>
<dbReference type="InterPro" id="IPR000702">
    <property type="entry name" value="Ribosomal_uL6-like"/>
</dbReference>
<dbReference type="InterPro" id="IPR036789">
    <property type="entry name" value="Ribosomal_uL6-like_a/b-dom_sf"/>
</dbReference>
<dbReference type="InterPro" id="IPR020040">
    <property type="entry name" value="Ribosomal_uL6_a/b-dom"/>
</dbReference>
<dbReference type="InterPro" id="IPR019906">
    <property type="entry name" value="Ribosomal_uL6_bac-type"/>
</dbReference>
<dbReference type="InterPro" id="IPR002358">
    <property type="entry name" value="Ribosomal_uL6_CS"/>
</dbReference>
<dbReference type="NCBIfam" id="TIGR03654">
    <property type="entry name" value="L6_bact"/>
    <property type="match status" value="1"/>
</dbReference>
<dbReference type="PANTHER" id="PTHR11655">
    <property type="entry name" value="60S/50S RIBOSOMAL PROTEIN L6/L9"/>
    <property type="match status" value="1"/>
</dbReference>
<dbReference type="PANTHER" id="PTHR11655:SF14">
    <property type="entry name" value="LARGE RIBOSOMAL SUBUNIT PROTEIN UL6M"/>
    <property type="match status" value="1"/>
</dbReference>
<dbReference type="Pfam" id="PF00347">
    <property type="entry name" value="Ribosomal_L6"/>
    <property type="match status" value="2"/>
</dbReference>
<dbReference type="PIRSF" id="PIRSF002162">
    <property type="entry name" value="Ribosomal_L6"/>
    <property type="match status" value="1"/>
</dbReference>
<dbReference type="PRINTS" id="PR00059">
    <property type="entry name" value="RIBOSOMALL6"/>
</dbReference>
<dbReference type="SUPFAM" id="SSF56053">
    <property type="entry name" value="Ribosomal protein L6"/>
    <property type="match status" value="2"/>
</dbReference>
<dbReference type="PROSITE" id="PS00525">
    <property type="entry name" value="RIBOSOMAL_L6_1"/>
    <property type="match status" value="1"/>
</dbReference>
<evidence type="ECO:0000255" key="1">
    <source>
        <dbReference type="HAMAP-Rule" id="MF_01365"/>
    </source>
</evidence>
<evidence type="ECO:0000305" key="2"/>
<sequence>MSRVGKSIIKLPAKVEVKADAEALTIKGPLGELKTPIYEGVSANVENGELVFTRKSEDQKTVALHGLVRSLAMNCVKGVTSGWEKNLEITGVGYRAQKRGKDLVMALGYSHEVVFPEPNGIKIEVADQLKIKVSGIDRQLVGQVAADIRSKRPPEPYKGKGIKYQNEYIRRKAGKTGKK</sequence>
<name>RL6_LEPBP</name>
<comment type="function">
    <text evidence="1">This protein binds to the 23S rRNA, and is important in its secondary structure. It is located near the subunit interface in the base of the L7/L12 stalk, and near the tRNA binding site of the peptidyltransferase center.</text>
</comment>
<comment type="subunit">
    <text evidence="1">Part of the 50S ribosomal subunit.</text>
</comment>
<comment type="similarity">
    <text evidence="1">Belongs to the universal ribosomal protein uL6 family.</text>
</comment>
<protein>
    <recommendedName>
        <fullName evidence="1">Large ribosomal subunit protein uL6</fullName>
    </recommendedName>
    <alternativeName>
        <fullName evidence="2">50S ribosomal protein L6</fullName>
    </alternativeName>
</protein>
<organism>
    <name type="scientific">Leptospira biflexa serovar Patoc (strain Patoc 1 / ATCC 23582 / Paris)</name>
    <dbReference type="NCBI Taxonomy" id="456481"/>
    <lineage>
        <taxon>Bacteria</taxon>
        <taxon>Pseudomonadati</taxon>
        <taxon>Spirochaetota</taxon>
        <taxon>Spirochaetia</taxon>
        <taxon>Leptospirales</taxon>
        <taxon>Leptospiraceae</taxon>
        <taxon>Leptospira</taxon>
    </lineage>
</organism>
<keyword id="KW-1185">Reference proteome</keyword>
<keyword id="KW-0687">Ribonucleoprotein</keyword>
<keyword id="KW-0689">Ribosomal protein</keyword>
<keyword id="KW-0694">RNA-binding</keyword>
<keyword id="KW-0699">rRNA-binding</keyword>
<feature type="chain" id="PRO_1000144009" description="Large ribosomal subunit protein uL6">
    <location>
        <begin position="1"/>
        <end position="179"/>
    </location>
</feature>
<gene>
    <name evidence="1" type="primary">rplF</name>
    <name type="ordered locus">LEPBI_I1950</name>
</gene>